<dbReference type="EMBL" id="AF311312">
    <property type="protein sequence ID" value="AAG23967.1"/>
    <property type="molecule type" value="mRNA"/>
</dbReference>
<dbReference type="EMBL" id="AK057482">
    <property type="protein sequence ID" value="BAG51920.1"/>
    <property type="molecule type" value="mRNA"/>
</dbReference>
<dbReference type="EMBL" id="AC025647">
    <property type="status" value="NOT_ANNOTATED_CDS"/>
    <property type="molecule type" value="Genomic_DNA"/>
</dbReference>
<dbReference type="EMBL" id="CH471060">
    <property type="protein sequence ID" value="EAW91800.1"/>
    <property type="molecule type" value="Genomic_DNA"/>
</dbReference>
<dbReference type="EMBL" id="BC055091">
    <property type="protein sequence ID" value="AAH55091.1"/>
    <property type="status" value="ALT_SEQ"/>
    <property type="molecule type" value="mRNA"/>
</dbReference>
<dbReference type="CCDS" id="CCDS34930.1">
    <molecule id="Q07617-1"/>
</dbReference>
<dbReference type="RefSeq" id="NP_001361250.1">
    <molecule id="Q07617-1"/>
    <property type="nucleotide sequence ID" value="NM_001374321.1"/>
</dbReference>
<dbReference type="RefSeq" id="NP_003105.2">
    <molecule id="Q07617-1"/>
    <property type="nucleotide sequence ID" value="NM_003114.4"/>
</dbReference>
<dbReference type="RefSeq" id="NP_757367.1">
    <molecule id="Q07617-1"/>
    <property type="nucleotide sequence ID" value="NM_172218.3"/>
</dbReference>
<dbReference type="RefSeq" id="XP_011515544.1">
    <property type="nucleotide sequence ID" value="XM_011517242.2"/>
</dbReference>
<dbReference type="RefSeq" id="XP_011515545.1">
    <molecule id="Q07617-1"/>
    <property type="nucleotide sequence ID" value="XM_011517243.3"/>
</dbReference>
<dbReference type="RefSeq" id="XP_047278084.1">
    <molecule id="Q07617-1"/>
    <property type="nucleotide sequence ID" value="XM_047422128.1"/>
</dbReference>
<dbReference type="PDB" id="6I57">
    <property type="method" value="NMR"/>
    <property type="chains" value="A=622-742"/>
</dbReference>
<dbReference type="PDB" id="7BEV">
    <property type="method" value="NMR"/>
    <property type="chains" value="A=206-327"/>
</dbReference>
<dbReference type="PDBsum" id="6I57"/>
<dbReference type="PDBsum" id="7BEV"/>
<dbReference type="SASBDB" id="Q07617"/>
<dbReference type="SMR" id="Q07617"/>
<dbReference type="BioGRID" id="112556">
    <property type="interactions" value="43"/>
</dbReference>
<dbReference type="ComplexPortal" id="CPX-6150">
    <property type="entry name" value="R2SP co-chaperone complex"/>
</dbReference>
<dbReference type="ComplexPortal" id="CPX-6152">
    <property type="entry name" value="R2SD co-chaperone complex"/>
</dbReference>
<dbReference type="CORUM" id="Q07617"/>
<dbReference type="FunCoup" id="Q07617">
    <property type="interactions" value="375"/>
</dbReference>
<dbReference type="IntAct" id="Q07617">
    <property type="interactions" value="16"/>
</dbReference>
<dbReference type="MINT" id="Q07617"/>
<dbReference type="STRING" id="9606.ENSP00000373450"/>
<dbReference type="GlyGen" id="Q07617">
    <property type="glycosylation" value="1 site, 1 O-linked glycan (1 site)"/>
</dbReference>
<dbReference type="iPTMnet" id="Q07617"/>
<dbReference type="PhosphoSitePlus" id="Q07617"/>
<dbReference type="BioMuta" id="SPAG1"/>
<dbReference type="DMDM" id="223634718"/>
<dbReference type="jPOST" id="Q07617"/>
<dbReference type="MassIVE" id="Q07617"/>
<dbReference type="PaxDb" id="9606-ENSP00000373450"/>
<dbReference type="PeptideAtlas" id="Q07617"/>
<dbReference type="ProteomicsDB" id="33786"/>
<dbReference type="ProteomicsDB" id="58520">
    <molecule id="Q07617-1"/>
</dbReference>
<dbReference type="Pumba" id="Q07617"/>
<dbReference type="Antibodypedia" id="26172">
    <property type="antibodies" value="167 antibodies from 17 providers"/>
</dbReference>
<dbReference type="DNASU" id="6674"/>
<dbReference type="Ensembl" id="ENST00000251809.4">
    <molecule id="Q07617-1"/>
    <property type="protein sequence ID" value="ENSP00000251809.3"/>
    <property type="gene ID" value="ENSG00000104450.13"/>
</dbReference>
<dbReference type="Ensembl" id="ENST00000388798.7">
    <molecule id="Q07617-1"/>
    <property type="protein sequence ID" value="ENSP00000373450.3"/>
    <property type="gene ID" value="ENSG00000104450.13"/>
</dbReference>
<dbReference type="Ensembl" id="ENST00000520508.5">
    <molecule id="Q07617-2"/>
    <property type="protein sequence ID" value="ENSP00000428070.1"/>
    <property type="gene ID" value="ENSG00000104450.13"/>
</dbReference>
<dbReference type="Ensembl" id="ENST00000520643.5">
    <molecule id="Q07617-2"/>
    <property type="protein sequence ID" value="ENSP00000427716.1"/>
    <property type="gene ID" value="ENSG00000104450.13"/>
</dbReference>
<dbReference type="GeneID" id="6674"/>
<dbReference type="KEGG" id="hsa:6674"/>
<dbReference type="MANE-Select" id="ENST00000388798.7">
    <property type="protein sequence ID" value="ENSP00000373450.3"/>
    <property type="RefSeq nucleotide sequence ID" value="NM_003114.5"/>
    <property type="RefSeq protein sequence ID" value="NP_003105.2"/>
</dbReference>
<dbReference type="UCSC" id="uc003yjg.2">
    <molecule id="Q07617-1"/>
    <property type="organism name" value="human"/>
</dbReference>
<dbReference type="AGR" id="HGNC:11212"/>
<dbReference type="CTD" id="6674"/>
<dbReference type="DisGeNET" id="6674"/>
<dbReference type="GeneCards" id="SPAG1"/>
<dbReference type="GeneReviews" id="SPAG1"/>
<dbReference type="HGNC" id="HGNC:11212">
    <property type="gene designation" value="SPAG1"/>
</dbReference>
<dbReference type="HPA" id="ENSG00000104450">
    <property type="expression patterns" value="Low tissue specificity"/>
</dbReference>
<dbReference type="MalaCards" id="SPAG1"/>
<dbReference type="MIM" id="603395">
    <property type="type" value="gene"/>
</dbReference>
<dbReference type="MIM" id="615505">
    <property type="type" value="phenotype"/>
</dbReference>
<dbReference type="neXtProt" id="NX_Q07617"/>
<dbReference type="OpenTargets" id="ENSG00000104450"/>
<dbReference type="Orphanet" id="244">
    <property type="disease" value="Primary ciliary dyskinesia"/>
</dbReference>
<dbReference type="PharmGKB" id="PA36049"/>
<dbReference type="VEuPathDB" id="HostDB:ENSG00000104450"/>
<dbReference type="eggNOG" id="KOG1124">
    <property type="taxonomic scope" value="Eukaryota"/>
</dbReference>
<dbReference type="GeneTree" id="ENSGT00940000154697"/>
<dbReference type="HOGENOM" id="CLU_044641_0_0_1"/>
<dbReference type="InParanoid" id="Q07617"/>
<dbReference type="OMA" id="ECTIYTN"/>
<dbReference type="OrthoDB" id="2942533at2759"/>
<dbReference type="PAN-GO" id="Q07617">
    <property type="GO annotations" value="2 GO annotations based on evolutionary models"/>
</dbReference>
<dbReference type="PhylomeDB" id="Q07617"/>
<dbReference type="TreeFam" id="TF106251"/>
<dbReference type="PathwayCommons" id="Q07617"/>
<dbReference type="SignaLink" id="Q07617"/>
<dbReference type="SIGNOR" id="Q07617"/>
<dbReference type="BioGRID-ORCS" id="6674">
    <property type="hits" value="15 hits in 1146 CRISPR screens"/>
</dbReference>
<dbReference type="ChiTaRS" id="SPAG1">
    <property type="organism name" value="human"/>
</dbReference>
<dbReference type="GeneWiki" id="SPAG1"/>
<dbReference type="GenomeRNAi" id="6674"/>
<dbReference type="Pharos" id="Q07617">
    <property type="development level" value="Tbio"/>
</dbReference>
<dbReference type="PRO" id="PR:Q07617"/>
<dbReference type="Proteomes" id="UP000005640">
    <property type="component" value="Chromosome 8"/>
</dbReference>
<dbReference type="RNAct" id="Q07617">
    <property type="molecule type" value="protein"/>
</dbReference>
<dbReference type="Bgee" id="ENSG00000104450">
    <property type="expression patterns" value="Expressed in bronchial epithelial cell and 166 other cell types or tissues"/>
</dbReference>
<dbReference type="GO" id="GO:0005929">
    <property type="term" value="C:cilium"/>
    <property type="evidence" value="ECO:0000314"/>
    <property type="project" value="HPA"/>
</dbReference>
<dbReference type="GO" id="GO:0005737">
    <property type="term" value="C:cytoplasm"/>
    <property type="evidence" value="ECO:0000314"/>
    <property type="project" value="UniProtKB"/>
</dbReference>
<dbReference type="GO" id="GO:0005829">
    <property type="term" value="C:cytosol"/>
    <property type="evidence" value="ECO:0000314"/>
    <property type="project" value="HPA"/>
</dbReference>
<dbReference type="GO" id="GO:0120293">
    <property type="term" value="C:dynein axonemal particle"/>
    <property type="evidence" value="ECO:0007669"/>
    <property type="project" value="UniProtKB-SubCell"/>
</dbReference>
<dbReference type="GO" id="GO:0005654">
    <property type="term" value="C:nucleoplasm"/>
    <property type="evidence" value="ECO:0000314"/>
    <property type="project" value="HPA"/>
</dbReference>
<dbReference type="GO" id="GO:0101031">
    <property type="term" value="C:protein folding chaperone complex"/>
    <property type="evidence" value="ECO:0000353"/>
    <property type="project" value="ComplexPortal"/>
</dbReference>
<dbReference type="GO" id="GO:0005525">
    <property type="term" value="F:GTP binding"/>
    <property type="evidence" value="ECO:0007669"/>
    <property type="project" value="UniProtKB-KW"/>
</dbReference>
<dbReference type="GO" id="GO:0016787">
    <property type="term" value="F:hydrolase activity"/>
    <property type="evidence" value="ECO:0007669"/>
    <property type="project" value="UniProtKB-KW"/>
</dbReference>
<dbReference type="GO" id="GO:0070286">
    <property type="term" value="P:axonemal dynein complex assembly"/>
    <property type="evidence" value="ECO:0000250"/>
    <property type="project" value="UniProtKB"/>
</dbReference>
<dbReference type="GO" id="GO:0050821">
    <property type="term" value="P:protein stabilization"/>
    <property type="evidence" value="ECO:0000303"/>
    <property type="project" value="ComplexPortal"/>
</dbReference>
<dbReference type="GO" id="GO:0007338">
    <property type="term" value="P:single fertilization"/>
    <property type="evidence" value="ECO:0000304"/>
    <property type="project" value="ProtInc"/>
</dbReference>
<dbReference type="FunFam" id="1.25.40.10:FF:000221">
    <property type="entry name" value="Mitochondrial import receptor subunit TOM34"/>
    <property type="match status" value="1"/>
</dbReference>
<dbReference type="FunFam" id="1.25.40.10:FF:000368">
    <property type="entry name" value="Sperm associated antigen 1"/>
    <property type="match status" value="1"/>
</dbReference>
<dbReference type="FunFam" id="1.25.40.10:FF:000375">
    <property type="entry name" value="Sperm associated antigen 1"/>
    <property type="match status" value="1"/>
</dbReference>
<dbReference type="Gene3D" id="1.25.40.10">
    <property type="entry name" value="Tetratricopeptide repeat domain"/>
    <property type="match status" value="3"/>
</dbReference>
<dbReference type="InterPro" id="IPR051982">
    <property type="entry name" value="CiliaryAsmbly_MitoImport"/>
</dbReference>
<dbReference type="InterPro" id="IPR025986">
    <property type="entry name" value="RPAP3-like_C"/>
</dbReference>
<dbReference type="InterPro" id="IPR011990">
    <property type="entry name" value="TPR-like_helical_dom_sf"/>
</dbReference>
<dbReference type="InterPro" id="IPR019734">
    <property type="entry name" value="TPR_rpt"/>
</dbReference>
<dbReference type="PANTHER" id="PTHR45984">
    <property type="entry name" value="RNA (RNA) POLYMERASE II ASSOCIATED PROTEIN HOMOLOG"/>
    <property type="match status" value="1"/>
</dbReference>
<dbReference type="PANTHER" id="PTHR45984:SF3">
    <property type="entry name" value="SPERM-ASSOCIATED ANTIGEN 1"/>
    <property type="match status" value="1"/>
</dbReference>
<dbReference type="Pfam" id="PF13877">
    <property type="entry name" value="RPAP3_C"/>
    <property type="match status" value="1"/>
</dbReference>
<dbReference type="Pfam" id="PF00515">
    <property type="entry name" value="TPR_1"/>
    <property type="match status" value="1"/>
</dbReference>
<dbReference type="Pfam" id="PF13181">
    <property type="entry name" value="TPR_8"/>
    <property type="match status" value="1"/>
</dbReference>
<dbReference type="SMART" id="SM00028">
    <property type="entry name" value="TPR"/>
    <property type="match status" value="9"/>
</dbReference>
<dbReference type="SUPFAM" id="SSF48452">
    <property type="entry name" value="TPR-like"/>
    <property type="match status" value="3"/>
</dbReference>
<dbReference type="PROSITE" id="PS50005">
    <property type="entry name" value="TPR"/>
    <property type="match status" value="8"/>
</dbReference>
<dbReference type="PROSITE" id="PS50293">
    <property type="entry name" value="TPR_REGION"/>
    <property type="match status" value="4"/>
</dbReference>
<feature type="chain" id="PRO_0000106324" description="Sperm-associated antigen 1">
    <location>
        <begin position="1"/>
        <end position="926"/>
    </location>
</feature>
<feature type="repeat" description="TPR 1">
    <location>
        <begin position="209"/>
        <end position="242"/>
    </location>
</feature>
<feature type="repeat" description="TPR 2">
    <location>
        <begin position="244"/>
        <end position="275"/>
    </location>
</feature>
<feature type="repeat" description="TPR 3">
    <location>
        <begin position="276"/>
        <end position="309"/>
    </location>
</feature>
<feature type="repeat" description="TPR 4">
    <location>
        <begin position="445"/>
        <end position="478"/>
    </location>
</feature>
<feature type="repeat" description="TPR 5">
    <location>
        <begin position="487"/>
        <end position="520"/>
    </location>
</feature>
<feature type="repeat" description="TPR 6">
    <location>
        <begin position="522"/>
        <end position="554"/>
    </location>
</feature>
<feature type="repeat" description="TPR 7">
    <location>
        <begin position="623"/>
        <end position="656"/>
    </location>
</feature>
<feature type="repeat" description="TPR 8">
    <location>
        <begin position="657"/>
        <end position="690"/>
    </location>
</feature>
<feature type="repeat" description="TPR 9">
    <location>
        <begin position="692"/>
        <end position="724"/>
    </location>
</feature>
<feature type="region of interest" description="Disordered" evidence="4">
    <location>
        <begin position="318"/>
        <end position="452"/>
    </location>
</feature>
<feature type="region of interest" description="Disordered" evidence="4">
    <location>
        <begin position="758"/>
        <end position="801"/>
    </location>
</feature>
<feature type="compositionally biased region" description="Basic and acidic residues" evidence="4">
    <location>
        <begin position="352"/>
        <end position="368"/>
    </location>
</feature>
<feature type="compositionally biased region" description="Low complexity" evidence="4">
    <location>
        <begin position="369"/>
        <end position="379"/>
    </location>
</feature>
<feature type="compositionally biased region" description="Gly residues" evidence="4">
    <location>
        <begin position="428"/>
        <end position="441"/>
    </location>
</feature>
<feature type="compositionally biased region" description="Basic and acidic residues" evidence="4">
    <location>
        <begin position="758"/>
        <end position="769"/>
    </location>
</feature>
<feature type="compositionally biased region" description="Basic and acidic residues" evidence="4">
    <location>
        <begin position="784"/>
        <end position="799"/>
    </location>
</feature>
<feature type="binding site" evidence="3">
    <location>
        <begin position="781"/>
        <end position="788"/>
    </location>
    <ligand>
        <name>GTP</name>
        <dbReference type="ChEBI" id="CHEBI:37565"/>
    </ligand>
</feature>
<feature type="modified residue" description="Phosphoserine" evidence="11">
    <location>
        <position position="347"/>
    </location>
</feature>
<feature type="modified residue" description="Phosphoserine" evidence="2">
    <location>
        <position position="354"/>
    </location>
</feature>
<feature type="modified residue" description="Phosphoserine" evidence="12">
    <location>
        <position position="423"/>
    </location>
</feature>
<feature type="modified residue" description="Phosphoserine" evidence="11">
    <location>
        <position position="791"/>
    </location>
</feature>
<feature type="splice variant" id="VSP_054290" description="In isoform 2." evidence="9">
    <original>KPAEPAGAARAAQPCVMGNIQKKLTGKAEGGKRPARGAPQRGQTPEAGADK</original>
    <variation>SKIFFLFRLCKKLPFNMMSWLNFSIRTEIRNLSVFLALPCKFTSQFRSSFS</variation>
    <location>
        <begin position="366"/>
        <end position="416"/>
    </location>
</feature>
<feature type="splice variant" id="VSP_054291" description="In isoform 2." evidence="9">
    <location>
        <begin position="417"/>
        <end position="926"/>
    </location>
</feature>
<feature type="sequence variant" id="VAR_054324" description="In dbSNP:rs17335870.">
    <original>E</original>
    <variation>K</variation>
    <location>
        <position position="331"/>
    </location>
</feature>
<feature type="sequence variant" id="VAR_054325" description="In dbSNP:rs6511." evidence="5">
    <original>M</original>
    <variation>T</variation>
    <location>
        <position position="777"/>
    </location>
</feature>
<feature type="sequence variant" id="VAR_054326" description="In dbSNP:rs6510.">
    <original>H</original>
    <variation>Y</variation>
    <location>
        <position position="827"/>
    </location>
</feature>
<feature type="sequence conflict" description="In Ref. 1; AAG23967." evidence="10" ref="1">
    <original>H</original>
    <variation>R</variation>
    <location>
        <position position="187"/>
    </location>
</feature>
<feature type="sequence conflict" description="In Ref. 2; BAG51920." evidence="10" ref="2">
    <original>I</original>
    <variation>V</variation>
    <location>
        <position position="195"/>
    </location>
</feature>
<feature type="sequence conflict" description="In Ref. 1; AAG23967." evidence="10" ref="1">
    <original>K</original>
    <variation>T</variation>
    <location>
        <position position="655"/>
    </location>
</feature>
<feature type="helix" evidence="14">
    <location>
        <begin position="206"/>
        <end position="222"/>
    </location>
</feature>
<feature type="helix" evidence="14">
    <location>
        <begin position="225"/>
        <end position="238"/>
    </location>
</feature>
<feature type="helix" evidence="14">
    <location>
        <begin position="242"/>
        <end position="254"/>
    </location>
</feature>
<feature type="helix" evidence="14">
    <location>
        <begin position="258"/>
        <end position="271"/>
    </location>
</feature>
<feature type="helix" evidence="14">
    <location>
        <begin position="276"/>
        <end position="288"/>
    </location>
</feature>
<feature type="helix" evidence="14">
    <location>
        <begin position="292"/>
        <end position="303"/>
    </location>
</feature>
<feature type="helix" evidence="14">
    <location>
        <begin position="310"/>
        <end position="325"/>
    </location>
</feature>
<feature type="helix" evidence="13">
    <location>
        <begin position="623"/>
        <end position="635"/>
    </location>
</feature>
<feature type="helix" evidence="13">
    <location>
        <begin position="639"/>
        <end position="652"/>
    </location>
</feature>
<feature type="helix" evidence="13">
    <location>
        <begin position="657"/>
        <end position="669"/>
    </location>
</feature>
<feature type="helix" evidence="13">
    <location>
        <begin position="673"/>
        <end position="686"/>
    </location>
</feature>
<feature type="helix" evidence="13">
    <location>
        <begin position="691"/>
        <end position="703"/>
    </location>
</feature>
<feature type="helix" evidence="13">
    <location>
        <begin position="707"/>
        <end position="720"/>
    </location>
</feature>
<feature type="helix" evidence="13">
    <location>
        <begin position="725"/>
        <end position="738"/>
    </location>
</feature>
<proteinExistence type="evidence at protein level"/>
<comment type="function">
    <text evidence="1 5 6">May play a role in the cytoplasmic assembly of the ciliary dynein arms (By similarity). May play a role in fertilization. Binds GTP and has GTPase activity.</text>
</comment>
<comment type="subcellular location">
    <subcellularLocation>
        <location evidence="5 7">Cytoplasm</location>
    </subcellularLocation>
    <subcellularLocation>
        <location evidence="10">Dynein axonemal particle</location>
    </subcellularLocation>
    <text>Colocalizes with tubulin.</text>
</comment>
<comment type="alternative products">
    <event type="alternative splicing"/>
    <isoform>
        <id>Q07617-1</id>
        <name>1</name>
        <sequence type="displayed"/>
    </isoform>
    <isoform>
        <id>Q07617-2</id>
        <name>2</name>
        <sequence type="described" ref="VSP_054290 VSP_054291"/>
    </isoform>
</comment>
<comment type="tissue specificity">
    <text evidence="5 6 7 8">Present in most tissues, including lung, with the strongest expression in brain, colon, kidney, and testis. In sperm and testis, detected in particular in pachytene primary spermatocytes. Up-regulated in pancreatic tumor tissues and not in normal pancreatic tissue.</text>
</comment>
<comment type="disease" evidence="8">
    <disease id="DI-03944">
        <name>Ciliary dyskinesia, primary, 28</name>
        <acronym>CILD28</acronym>
        <description>A disorder characterized by abnormalities of motile cilia. Respiratory infections leading to chronic inflammation and bronchiectasis are recurrent, due to defects in the respiratory cilia. Patients may exhibit randomization of left-right body asymmetry and situs inversus, due to dysfunction of monocilia at the embryonic node. Primary ciliary dyskinesia associated with situs inversus is referred to as Kartagener syndrome.</description>
        <dbReference type="MIM" id="615505"/>
    </disease>
    <text>The disease is caused by variants affecting the gene represented in this entry.</text>
</comment>
<comment type="miscellaneous">
    <text evidence="1">Antibodies against SPAG1 interfere with fertilization.</text>
</comment>
<comment type="sequence caution" evidence="10">
    <conflict type="miscellaneous discrepancy">
        <sequence resource="EMBL-CDS" id="AAH55091"/>
    </conflict>
    <text>Contaminating sequence. Potential poly-A sequence.</text>
</comment>
<sequence>MTTKDYPSLWGFGTTKTFKIPIEHLDFKYIEKCSDVKHLEKILCVLRSGEEGYYPELTEFCEKHLQALAPESRALRKDKPAATAASFTAEEWEKIDGDIKSWVSEIKKEEDKMHFHETETFPAMKDNLPPVRGSNSCLHVGKEKYSKRPTKKKTPRDYAEWDKFDVEKECLKIDEDYKEKTVIDKSHLSKIETRIDTAGLTEKEKDFLATREKEKGNEAFNSGDYEEAVMYYTRSISALPTVVAYNNRAQAEIKLQNWNSAFQDCEKVLELEPGNVKALLRRATTYKHQNKLREATEDLSKVLDVEPDNDLAKKTLSEVERDLKNSEAASETQTKGKRMVIQEIENSEDEEGKSGRKHEDGGGDKKPAEPAGAARAAQPCVMGNIQKKLTGKAEGGKRPARGAPQRGQTPEAGADKRSPRRASAAAAAGGGATGHPGGGQGAENPAGLKSQGNELFRSGQFAEAAGKYSAAIALLEPAGSEIADDLSILYSNRAACYLKEGNCSGCIQDCNRALELHPFSMKPLLRRAMAYETLEQYGKAYVDYKTVLQIDCGLQLANDSVNRLSRILMELDGPNWREKLSPIPAVPASVPLQAWHPAKEMISKQAGDSSSHRQQGITDEKTFKALKEEGNQCVNDKNYKDALSKYSECLKINNKECAIYTNRALCYLKLCQFEEAKQDCDQALQLADGNVKAFYRRALAHKGLKNYQKSLIDLNKVILLDPSIIEAKMELEEVTRLLNLKDKTAPFNKEKERRKIEIQEVNEGKEEPGRPAGEVSMGCLASEKGGKSSRSPEDPEKLPIAKPNNAYEFGQIINALSTRKDKEACAHLLAITAPKDLPMFLSNKLEGDTFLLLIQSLKNNLIEKDPSLVYQHLLYLSKAERFKMMLTLISKGQKELIEQLFEDLSDTPNNHFTLEDIQALKRQYEL</sequence>
<accession>Q07617</accession>
<accession>A6NP70</accession>
<accession>B3KQ58</accession>
<accession>G3XAM3</accession>
<accession>Q7Z5G1</accession>
<gene>
    <name type="primary">SPAG1</name>
</gene>
<name>SPAG1_HUMAN</name>
<evidence type="ECO:0000250" key="1"/>
<evidence type="ECO:0000250" key="2">
    <source>
        <dbReference type="UniProtKB" id="Q80ZX8"/>
    </source>
</evidence>
<evidence type="ECO:0000255" key="3"/>
<evidence type="ECO:0000256" key="4">
    <source>
        <dbReference type="SAM" id="MobiDB-lite"/>
    </source>
</evidence>
<evidence type="ECO:0000269" key="5">
    <source>
    </source>
</evidence>
<evidence type="ECO:0000269" key="6">
    <source>
    </source>
</evidence>
<evidence type="ECO:0000269" key="7">
    <source>
    </source>
</evidence>
<evidence type="ECO:0000269" key="8">
    <source>
    </source>
</evidence>
<evidence type="ECO:0000303" key="9">
    <source>
    </source>
</evidence>
<evidence type="ECO:0000305" key="10"/>
<evidence type="ECO:0007744" key="11">
    <source>
    </source>
</evidence>
<evidence type="ECO:0007744" key="12">
    <source>
    </source>
</evidence>
<evidence type="ECO:0007829" key="13">
    <source>
        <dbReference type="PDB" id="6I57"/>
    </source>
</evidence>
<evidence type="ECO:0007829" key="14">
    <source>
        <dbReference type="PDB" id="7BEV"/>
    </source>
</evidence>
<organism>
    <name type="scientific">Homo sapiens</name>
    <name type="common">Human</name>
    <dbReference type="NCBI Taxonomy" id="9606"/>
    <lineage>
        <taxon>Eukaryota</taxon>
        <taxon>Metazoa</taxon>
        <taxon>Chordata</taxon>
        <taxon>Craniata</taxon>
        <taxon>Vertebrata</taxon>
        <taxon>Euteleostomi</taxon>
        <taxon>Mammalia</taxon>
        <taxon>Eutheria</taxon>
        <taxon>Euarchontoglires</taxon>
        <taxon>Primates</taxon>
        <taxon>Haplorrhini</taxon>
        <taxon>Catarrhini</taxon>
        <taxon>Hominidae</taxon>
        <taxon>Homo</taxon>
    </lineage>
</organism>
<reference key="1">
    <citation type="journal article" date="2001" name="Mol. Hum. Reprod.">
        <title>Expression and function of the HSD-3.8 gene encoding a testis-specific protein.</title>
        <authorList>
            <person name="Lin W."/>
            <person name="Zhou X.F."/>
            <person name="Zhang M.L."/>
            <person name="Li Y."/>
            <person name="Miao S.Y."/>
            <person name="Wang L.F."/>
            <person name="Zong S.D."/>
            <person name="Koide S.S."/>
        </authorList>
    </citation>
    <scope>NUCLEOTIDE SEQUENCE [MRNA] (ISOFORM 1)</scope>
    <scope>FUNCTION</scope>
    <scope>SUBCELLULAR LOCATION</scope>
    <scope>TISSUE SPECIFICITY</scope>
    <scope>VARIANT THR-777</scope>
    <source>
        <tissue>Testis</tissue>
    </source>
</reference>
<reference key="2">
    <citation type="journal article" date="2004" name="Nat. Genet.">
        <title>Complete sequencing and characterization of 21,243 full-length human cDNAs.</title>
        <authorList>
            <person name="Ota T."/>
            <person name="Suzuki Y."/>
            <person name="Nishikawa T."/>
            <person name="Otsuki T."/>
            <person name="Sugiyama T."/>
            <person name="Irie R."/>
            <person name="Wakamatsu A."/>
            <person name="Hayashi K."/>
            <person name="Sato H."/>
            <person name="Nagai K."/>
            <person name="Kimura K."/>
            <person name="Makita H."/>
            <person name="Sekine M."/>
            <person name="Obayashi M."/>
            <person name="Nishi T."/>
            <person name="Shibahara T."/>
            <person name="Tanaka T."/>
            <person name="Ishii S."/>
            <person name="Yamamoto J."/>
            <person name="Saito K."/>
            <person name="Kawai Y."/>
            <person name="Isono Y."/>
            <person name="Nakamura Y."/>
            <person name="Nagahari K."/>
            <person name="Murakami K."/>
            <person name="Yasuda T."/>
            <person name="Iwayanagi T."/>
            <person name="Wagatsuma M."/>
            <person name="Shiratori A."/>
            <person name="Sudo H."/>
            <person name="Hosoiri T."/>
            <person name="Kaku Y."/>
            <person name="Kodaira H."/>
            <person name="Kondo H."/>
            <person name="Sugawara M."/>
            <person name="Takahashi M."/>
            <person name="Kanda K."/>
            <person name="Yokoi T."/>
            <person name="Furuya T."/>
            <person name="Kikkawa E."/>
            <person name="Omura Y."/>
            <person name="Abe K."/>
            <person name="Kamihara K."/>
            <person name="Katsuta N."/>
            <person name="Sato K."/>
            <person name="Tanikawa M."/>
            <person name="Yamazaki M."/>
            <person name="Ninomiya K."/>
            <person name="Ishibashi T."/>
            <person name="Yamashita H."/>
            <person name="Murakawa K."/>
            <person name="Fujimori K."/>
            <person name="Tanai H."/>
            <person name="Kimata M."/>
            <person name="Watanabe M."/>
            <person name="Hiraoka S."/>
            <person name="Chiba Y."/>
            <person name="Ishida S."/>
            <person name="Ono Y."/>
            <person name="Takiguchi S."/>
            <person name="Watanabe S."/>
            <person name="Yosida M."/>
            <person name="Hotuta T."/>
            <person name="Kusano J."/>
            <person name="Kanehori K."/>
            <person name="Takahashi-Fujii A."/>
            <person name="Hara H."/>
            <person name="Tanase T.-O."/>
            <person name="Nomura Y."/>
            <person name="Togiya S."/>
            <person name="Komai F."/>
            <person name="Hara R."/>
            <person name="Takeuchi K."/>
            <person name="Arita M."/>
            <person name="Imose N."/>
            <person name="Musashino K."/>
            <person name="Yuuki H."/>
            <person name="Oshima A."/>
            <person name="Sasaki N."/>
            <person name="Aotsuka S."/>
            <person name="Yoshikawa Y."/>
            <person name="Matsunawa H."/>
            <person name="Ichihara T."/>
            <person name="Shiohata N."/>
            <person name="Sano S."/>
            <person name="Moriya S."/>
            <person name="Momiyama H."/>
            <person name="Satoh N."/>
            <person name="Takami S."/>
            <person name="Terashima Y."/>
            <person name="Suzuki O."/>
            <person name="Nakagawa S."/>
            <person name="Senoh A."/>
            <person name="Mizoguchi H."/>
            <person name="Goto Y."/>
            <person name="Shimizu F."/>
            <person name="Wakebe H."/>
            <person name="Hishigaki H."/>
            <person name="Watanabe T."/>
            <person name="Sugiyama A."/>
            <person name="Takemoto M."/>
            <person name="Kawakami B."/>
            <person name="Yamazaki M."/>
            <person name="Watanabe K."/>
            <person name="Kumagai A."/>
            <person name="Itakura S."/>
            <person name="Fukuzumi Y."/>
            <person name="Fujimori Y."/>
            <person name="Komiyama M."/>
            <person name="Tashiro H."/>
            <person name="Tanigami A."/>
            <person name="Fujiwara T."/>
            <person name="Ono T."/>
            <person name="Yamada K."/>
            <person name="Fujii Y."/>
            <person name="Ozaki K."/>
            <person name="Hirao M."/>
            <person name="Ohmori Y."/>
            <person name="Kawabata A."/>
            <person name="Hikiji T."/>
            <person name="Kobatake N."/>
            <person name="Inagaki H."/>
            <person name="Ikema Y."/>
            <person name="Okamoto S."/>
            <person name="Okitani R."/>
            <person name="Kawakami T."/>
            <person name="Noguchi S."/>
            <person name="Itoh T."/>
            <person name="Shigeta K."/>
            <person name="Senba T."/>
            <person name="Matsumura K."/>
            <person name="Nakajima Y."/>
            <person name="Mizuno T."/>
            <person name="Morinaga M."/>
            <person name="Sasaki M."/>
            <person name="Togashi T."/>
            <person name="Oyama M."/>
            <person name="Hata H."/>
            <person name="Watanabe M."/>
            <person name="Komatsu T."/>
            <person name="Mizushima-Sugano J."/>
            <person name="Satoh T."/>
            <person name="Shirai Y."/>
            <person name="Takahashi Y."/>
            <person name="Nakagawa K."/>
            <person name="Okumura K."/>
            <person name="Nagase T."/>
            <person name="Nomura N."/>
            <person name="Kikuchi H."/>
            <person name="Masuho Y."/>
            <person name="Yamashita R."/>
            <person name="Nakai K."/>
            <person name="Yada T."/>
            <person name="Nakamura Y."/>
            <person name="Ohara O."/>
            <person name="Isogai T."/>
            <person name="Sugano S."/>
        </authorList>
    </citation>
    <scope>NUCLEOTIDE SEQUENCE [LARGE SCALE MRNA] (ISOFORM 2)</scope>
    <source>
        <tissue>Testis</tissue>
    </source>
</reference>
<reference key="3">
    <citation type="submission" date="2005-07" db="EMBL/GenBank/DDBJ databases">
        <authorList>
            <person name="Mural R.J."/>
            <person name="Istrail S."/>
            <person name="Sutton G.G."/>
            <person name="Florea L."/>
            <person name="Halpern A.L."/>
            <person name="Mobarry C.M."/>
            <person name="Lippert R."/>
            <person name="Walenz B."/>
            <person name="Shatkay H."/>
            <person name="Dew I."/>
            <person name="Miller J.R."/>
            <person name="Flanigan M.J."/>
            <person name="Edwards N.J."/>
            <person name="Bolanos R."/>
            <person name="Fasulo D."/>
            <person name="Halldorsson B.V."/>
            <person name="Hannenhalli S."/>
            <person name="Turner R."/>
            <person name="Yooseph S."/>
            <person name="Lu F."/>
            <person name="Nusskern D.R."/>
            <person name="Shue B.C."/>
            <person name="Zheng X.H."/>
            <person name="Zhong F."/>
            <person name="Delcher A.L."/>
            <person name="Huson D.H."/>
            <person name="Kravitz S.A."/>
            <person name="Mouchard L."/>
            <person name="Reinert K."/>
            <person name="Remington K.A."/>
            <person name="Clark A.G."/>
            <person name="Waterman M.S."/>
            <person name="Eichler E.E."/>
            <person name="Adams M.D."/>
            <person name="Hunkapiller M.W."/>
            <person name="Myers E.W."/>
            <person name="Venter J.C."/>
        </authorList>
    </citation>
    <scope>NUCLEOTIDE SEQUENCE [LARGE SCALE GENOMIC DNA]</scope>
</reference>
<reference key="4">
    <citation type="journal article" date="2006" name="Nature">
        <title>DNA sequence and analysis of human chromosome 8.</title>
        <authorList>
            <person name="Nusbaum C."/>
            <person name="Mikkelsen T.S."/>
            <person name="Zody M.C."/>
            <person name="Asakawa S."/>
            <person name="Taudien S."/>
            <person name="Garber M."/>
            <person name="Kodira C.D."/>
            <person name="Schueler M.G."/>
            <person name="Shimizu A."/>
            <person name="Whittaker C.A."/>
            <person name="Chang J.L."/>
            <person name="Cuomo C.A."/>
            <person name="Dewar K."/>
            <person name="FitzGerald M.G."/>
            <person name="Yang X."/>
            <person name="Allen N.R."/>
            <person name="Anderson S."/>
            <person name="Asakawa T."/>
            <person name="Blechschmidt K."/>
            <person name="Bloom T."/>
            <person name="Borowsky M.L."/>
            <person name="Butler J."/>
            <person name="Cook A."/>
            <person name="Corum B."/>
            <person name="DeArellano K."/>
            <person name="DeCaprio D."/>
            <person name="Dooley K.T."/>
            <person name="Dorris L. III"/>
            <person name="Engels R."/>
            <person name="Gloeckner G."/>
            <person name="Hafez N."/>
            <person name="Hagopian D.S."/>
            <person name="Hall J.L."/>
            <person name="Ishikawa S.K."/>
            <person name="Jaffe D.B."/>
            <person name="Kamat A."/>
            <person name="Kudoh J."/>
            <person name="Lehmann R."/>
            <person name="Lokitsang T."/>
            <person name="Macdonald P."/>
            <person name="Major J.E."/>
            <person name="Matthews C.D."/>
            <person name="Mauceli E."/>
            <person name="Menzel U."/>
            <person name="Mihalev A.H."/>
            <person name="Minoshima S."/>
            <person name="Murayama Y."/>
            <person name="Naylor J.W."/>
            <person name="Nicol R."/>
            <person name="Nguyen C."/>
            <person name="O'Leary S.B."/>
            <person name="O'Neill K."/>
            <person name="Parker S.C.J."/>
            <person name="Polley A."/>
            <person name="Raymond C.K."/>
            <person name="Reichwald K."/>
            <person name="Rodriguez J."/>
            <person name="Sasaki T."/>
            <person name="Schilhabel M."/>
            <person name="Siddiqui R."/>
            <person name="Smith C.L."/>
            <person name="Sneddon T.P."/>
            <person name="Talamas J.A."/>
            <person name="Tenzin P."/>
            <person name="Topham K."/>
            <person name="Venkataraman V."/>
            <person name="Wen G."/>
            <person name="Yamazaki S."/>
            <person name="Young S.K."/>
            <person name="Zeng Q."/>
            <person name="Zimmer A.R."/>
            <person name="Rosenthal A."/>
            <person name="Birren B.W."/>
            <person name="Platzer M."/>
            <person name="Shimizu N."/>
            <person name="Lander E.S."/>
        </authorList>
    </citation>
    <scope>NUCLEOTIDE SEQUENCE [LARGE SCALE GENOMIC DNA]</scope>
</reference>
<reference key="5">
    <citation type="journal article" date="2004" name="Genome Res.">
        <title>The status, quality, and expansion of the NIH full-length cDNA project: the Mammalian Gene Collection (MGC).</title>
        <authorList>
            <consortium name="The MGC Project Team"/>
        </authorList>
    </citation>
    <scope>NUCLEOTIDE SEQUENCE [LARGE SCALE MRNA] OF 1-153</scope>
    <source>
        <tissue>Testis</tissue>
    </source>
</reference>
<reference key="6">
    <citation type="journal article" date="1992" name="Chin. Med. J.">
        <title>Isolation and sequencing of the cDNA encoding the 75-kD human sperm protein related to infertility.</title>
        <authorList>
            <person name="Zhang M.L."/>
            <person name="Wang L.F."/>
            <person name="Miao S.Y."/>
            <person name="Koide S.S."/>
        </authorList>
    </citation>
    <scope>PARTIAL NUCLEOTIDE SEQUENCE [MRNA]</scope>
    <scope>FUNCTION</scope>
    <scope>TISSUE SPECIFICITY</scope>
</reference>
<reference key="7">
    <citation type="journal article" date="2007" name="Oncogene">
        <title>Sperm-associated antigen 1 is expressed early in pancreatic tumorigenesis and promotes motility of cancer cells.</title>
        <authorList>
            <person name="Neesse A."/>
            <person name="Gangeswaran R."/>
            <person name="Luettges J."/>
            <person name="Feakins R."/>
            <person name="Weeks M.E."/>
            <person name="Lemoine N.R."/>
            <person name="Crnogorac-Jurcevic T."/>
        </authorList>
    </citation>
    <scope>TISSUE SPECIFICITY</scope>
    <scope>SUBCELLULAR LOCATION</scope>
</reference>
<reference key="8">
    <citation type="journal article" date="2008" name="Proc. Natl. Acad. Sci. U.S.A.">
        <title>A quantitative atlas of mitotic phosphorylation.</title>
        <authorList>
            <person name="Dephoure N."/>
            <person name="Zhou C."/>
            <person name="Villen J."/>
            <person name="Beausoleil S.A."/>
            <person name="Bakalarski C.E."/>
            <person name="Elledge S.J."/>
            <person name="Gygi S.P."/>
        </authorList>
    </citation>
    <scope>PHOSPHORYLATION [LARGE SCALE ANALYSIS] AT SER-347 AND SER-791</scope>
    <scope>IDENTIFICATION BY MASS SPECTROMETRY [LARGE SCALE ANALYSIS]</scope>
    <source>
        <tissue>Cervix carcinoma</tissue>
    </source>
</reference>
<reference key="9">
    <citation type="journal article" date="2013" name="Am. J. Hum. Genet.">
        <title>Mutations in SPAG1 cause primary ciliary dyskinesia associated with defective outer and inner dynein arms.</title>
        <authorList>
            <person name="Knowles M.R."/>
            <person name="Ostrowski L.E."/>
            <person name="Loges N.T."/>
            <person name="Hurd T."/>
            <person name="Leigh M.W."/>
            <person name="Huang L."/>
            <person name="Wolf W.E."/>
            <person name="Carson J.L."/>
            <person name="Hazucha M.J."/>
            <person name="Yin W."/>
            <person name="Davis S.D."/>
            <person name="Dell S.D."/>
            <person name="Ferkol T.W."/>
            <person name="Sagel S.D."/>
            <person name="Olivier K.N."/>
            <person name="Jahnke C."/>
            <person name="Olbrich H."/>
            <person name="Werner C."/>
            <person name="Raidt J."/>
            <person name="Wallmeier J."/>
            <person name="Pennekamp P."/>
            <person name="Dougherty G.W."/>
            <person name="Hjeij R."/>
            <person name="Gee H.Y."/>
            <person name="Otto E.A."/>
            <person name="Halbritter J."/>
            <person name="Chaki M."/>
            <person name="Diaz K.A."/>
            <person name="Braun D.A."/>
            <person name="Porath J.D."/>
            <person name="Schueler M."/>
            <person name="Baktai G."/>
            <person name="Griese M."/>
            <person name="Turner E.H."/>
            <person name="Lewis A.P."/>
            <person name="Bamshad M.J."/>
            <person name="Nickerson D.A."/>
            <person name="Hildebrandt F."/>
            <person name="Shendure J."/>
            <person name="Omran H."/>
            <person name="Zariwala M.A."/>
        </authorList>
    </citation>
    <scope>INVOLVEMENT IN CILD28</scope>
    <scope>TISSUE SPECIFICITY</scope>
</reference>
<reference key="10">
    <citation type="journal article" date="2014" name="J. Proteomics">
        <title>An enzyme assisted RP-RPLC approach for in-depth analysis of human liver phosphoproteome.</title>
        <authorList>
            <person name="Bian Y."/>
            <person name="Song C."/>
            <person name="Cheng K."/>
            <person name="Dong M."/>
            <person name="Wang F."/>
            <person name="Huang J."/>
            <person name="Sun D."/>
            <person name="Wang L."/>
            <person name="Ye M."/>
            <person name="Zou H."/>
        </authorList>
    </citation>
    <scope>PHOSPHORYLATION [LARGE SCALE ANALYSIS] AT SER-423</scope>
    <scope>IDENTIFICATION BY MASS SPECTROMETRY [LARGE SCALE ANALYSIS]</scope>
    <source>
        <tissue>Liver</tissue>
    </source>
</reference>
<keyword id="KW-0002">3D-structure</keyword>
<keyword id="KW-0025">Alternative splicing</keyword>
<keyword id="KW-1186">Ciliopathy</keyword>
<keyword id="KW-0963">Cytoplasm</keyword>
<keyword id="KW-0278">Fertilization</keyword>
<keyword id="KW-0342">GTP-binding</keyword>
<keyword id="KW-0378">Hydrolase</keyword>
<keyword id="KW-1012">Kartagener syndrome</keyword>
<keyword id="KW-0547">Nucleotide-binding</keyword>
<keyword id="KW-0597">Phosphoprotein</keyword>
<keyword id="KW-0990">Primary ciliary dyskinesia</keyword>
<keyword id="KW-1267">Proteomics identification</keyword>
<keyword id="KW-1185">Reference proteome</keyword>
<keyword id="KW-0677">Repeat</keyword>
<keyword id="KW-0802">TPR repeat</keyword>
<protein>
    <recommendedName>
        <fullName>Sperm-associated antigen 1</fullName>
    </recommendedName>
    <alternativeName>
        <fullName>HSD-3.8</fullName>
    </alternativeName>
    <alternativeName>
        <fullName>Infertility-related sperm protein Spag-1</fullName>
    </alternativeName>
</protein>